<keyword id="KW-0002">3D-structure</keyword>
<keyword id="KW-0044">Antibiotic</keyword>
<keyword id="KW-0929">Antimicrobial</keyword>
<keyword id="KW-0078">Bacteriocin</keyword>
<keyword id="KW-0255">Endonuclease</keyword>
<keyword id="KW-0378">Hydrolase</keyword>
<keyword id="KW-0540">Nuclease</keyword>
<keyword id="KW-0614">Plasmid</keyword>
<feature type="chain" id="PRO_0000218681" description="Colicin-E5">
    <location>
        <begin position="1" status="less than"/>
        <end position="180"/>
    </location>
</feature>
<feature type="region of interest" description="Disordered" evidence="2">
    <location>
        <begin position="24"/>
        <end position="143"/>
    </location>
</feature>
<feature type="region of interest" description="Nuclease" evidence="1">
    <location>
        <begin position="74"/>
        <end position="180"/>
    </location>
</feature>
<feature type="region of interest" description="Disordered" evidence="2">
    <location>
        <begin position="155"/>
        <end position="180"/>
    </location>
</feature>
<feature type="compositionally biased region" description="Basic and acidic residues" evidence="2">
    <location>
        <begin position="54"/>
        <end position="76"/>
    </location>
</feature>
<feature type="compositionally biased region" description="Polar residues" evidence="2">
    <location>
        <begin position="106"/>
        <end position="116"/>
    </location>
</feature>
<feature type="compositionally biased region" description="Basic and acidic residues" evidence="2">
    <location>
        <begin position="160"/>
        <end position="171"/>
    </location>
</feature>
<feature type="sequence conflict" description="In Ref. 2; AAA98051." evidence="3" ref="2">
    <original>K</original>
    <variation>R</variation>
    <location>
        <position position="57"/>
    </location>
</feature>
<feature type="non-terminal residue">
    <location>
        <position position="1"/>
    </location>
</feature>
<feature type="helix" evidence="5">
    <location>
        <begin position="88"/>
        <end position="93"/>
    </location>
</feature>
<feature type="helix" evidence="5">
    <location>
        <begin position="94"/>
        <end position="96"/>
    </location>
</feature>
<feature type="helix" evidence="5">
    <location>
        <begin position="101"/>
        <end position="109"/>
    </location>
</feature>
<feature type="strand" evidence="5">
    <location>
        <begin position="114"/>
        <end position="120"/>
    </location>
</feature>
<feature type="helix" evidence="5">
    <location>
        <begin position="122"/>
        <end position="124"/>
    </location>
</feature>
<feature type="turn" evidence="5">
    <location>
        <begin position="126"/>
        <end position="128"/>
    </location>
</feature>
<feature type="strand" evidence="5">
    <location>
        <begin position="132"/>
        <end position="141"/>
    </location>
</feature>
<feature type="strand" evidence="5">
    <location>
        <begin position="144"/>
        <end position="149"/>
    </location>
</feature>
<feature type="turn" evidence="5">
    <location>
        <begin position="150"/>
        <end position="152"/>
    </location>
</feature>
<feature type="strand" evidence="5">
    <location>
        <begin position="154"/>
        <end position="158"/>
    </location>
</feature>
<feature type="strand" evidence="4">
    <location>
        <begin position="173"/>
        <end position="175"/>
    </location>
</feature>
<protein>
    <recommendedName>
        <fullName>Colicin-E5</fullName>
        <ecNumber>3.1.-.-</ecNumber>
    </recommendedName>
</protein>
<name>CEA5_ECOLX</name>
<evidence type="ECO:0000255" key="1"/>
<evidence type="ECO:0000256" key="2">
    <source>
        <dbReference type="SAM" id="MobiDB-lite"/>
    </source>
</evidence>
<evidence type="ECO:0000305" key="3"/>
<evidence type="ECO:0007829" key="4">
    <source>
        <dbReference type="PDB" id="2A8K"/>
    </source>
</evidence>
<evidence type="ECO:0007829" key="5">
    <source>
        <dbReference type="PDB" id="2FHZ"/>
    </source>
</evidence>
<sequence>RFAHDPMAGGHRMWQMAGLKAQRAQTDVNNKQAAFDAAAKEKADADAALSTAMESRKKKEDNKRDAEGKLNDELAKNKGKIPGLKIDQKIRGQMPERGWTEDDIKNTVSNGATGTSFDKRSPKKTPPDYLGRNDPATVYGSPGKYVVVNDRTGEVTQISDKTDPGWVDDSRIQWGNKNDQ</sequence>
<reference key="1">
    <citation type="journal article" date="1989" name="Mol. Gen. Genet.">
        <title>Nucleotide sequences from the colicin E5, E6 and E9 operons: presence of a degenerate transposon-like structure in the ColE9-J plasmid.</title>
        <authorList>
            <person name="Lau P.C.K."/>
            <person name="Condie J.A."/>
        </authorList>
    </citation>
    <scope>NUCLEOTIDE SEQUENCE [GENOMIC DNA]</scope>
</reference>
<reference key="2">
    <citation type="journal article" date="1989" name="J. Gen. Microbiol.">
        <title>An evolutionary relationship between the ColE5-099 and the ColE9-J plasmids revealed by nucleotide sequencing.</title>
        <authorList>
            <person name="Curtis M.D."/>
            <person name="James R."/>
            <person name="Coddington A."/>
        </authorList>
    </citation>
    <scope>NUCLEOTIDE SEQUENCE [GENOMIC DNA] OF 6-180</scope>
</reference>
<accession>P18000</accession>
<comment type="function">
    <text>Colicins are polypeptide toxins produced by and active against E.coli and closely related bacteria. This colicin is an endonuclease.</text>
</comment>
<comment type="similarity">
    <text evidence="3">Belongs to the colicin/pyosin nuclease family.</text>
</comment>
<gene>
    <name type="primary">col</name>
</gene>
<proteinExistence type="evidence at protein level"/>
<dbReference type="EC" id="3.1.-.-"/>
<dbReference type="EMBL" id="X15857">
    <property type="protein sequence ID" value="CAA33859.1"/>
    <property type="molecule type" value="Genomic_DNA"/>
</dbReference>
<dbReference type="EMBL" id="M30445">
    <property type="protein sequence ID" value="AAA98051.1"/>
    <property type="molecule type" value="Genomic_DNA"/>
</dbReference>
<dbReference type="PIR" id="A45799">
    <property type="entry name" value="A45799"/>
</dbReference>
<dbReference type="PIR" id="PQ0031">
    <property type="entry name" value="PQ0031"/>
</dbReference>
<dbReference type="RefSeq" id="WP_275542502.1">
    <property type="nucleotide sequence ID" value="NZ_NWRK01000114.1"/>
</dbReference>
<dbReference type="PDB" id="2A8K">
    <property type="method" value="X-ray"/>
    <property type="resolution" value="1.50 A"/>
    <property type="chains" value="A/B/C/D=74-180"/>
</dbReference>
<dbReference type="PDB" id="2DFX">
    <property type="method" value="X-ray"/>
    <property type="resolution" value="1.90 A"/>
    <property type="chains" value="E=66-180"/>
</dbReference>
<dbReference type="PDB" id="2DJH">
    <property type="method" value="X-ray"/>
    <property type="resolution" value="1.90 A"/>
    <property type="chains" value="A=66-180"/>
</dbReference>
<dbReference type="PDB" id="2FHZ">
    <property type="method" value="X-ray"/>
    <property type="resolution" value="1.15 A"/>
    <property type="chains" value="B=74-180"/>
</dbReference>
<dbReference type="PDB" id="3AO9">
    <property type="method" value="X-ray"/>
    <property type="resolution" value="2.10 A"/>
    <property type="chains" value="A/B=66-180"/>
</dbReference>
<dbReference type="PDB" id="3VJ7">
    <property type="method" value="X-ray"/>
    <property type="resolution" value="2.30 A"/>
    <property type="chains" value="A=66-180"/>
</dbReference>
<dbReference type="PDBsum" id="2A8K"/>
<dbReference type="PDBsum" id="2DFX"/>
<dbReference type="PDBsum" id="2DJH"/>
<dbReference type="PDBsum" id="2FHZ"/>
<dbReference type="PDBsum" id="3AO9"/>
<dbReference type="PDBsum" id="3VJ7"/>
<dbReference type="SMR" id="P18000"/>
<dbReference type="EvolutionaryTrace" id="P18000"/>
<dbReference type="GO" id="GO:0004519">
    <property type="term" value="F:endonuclease activity"/>
    <property type="evidence" value="ECO:0007669"/>
    <property type="project" value="UniProtKB-KW"/>
</dbReference>
<dbReference type="GO" id="GO:0004540">
    <property type="term" value="F:RNA nuclease activity"/>
    <property type="evidence" value="ECO:0007669"/>
    <property type="project" value="InterPro"/>
</dbReference>
<dbReference type="GO" id="GO:0042742">
    <property type="term" value="P:defense response to bacterium"/>
    <property type="evidence" value="ECO:0007669"/>
    <property type="project" value="UniProtKB-KW"/>
</dbReference>
<dbReference type="GO" id="GO:0031640">
    <property type="term" value="P:killing of cells of another organism"/>
    <property type="evidence" value="ECO:0007669"/>
    <property type="project" value="UniProtKB-KW"/>
</dbReference>
<dbReference type="Gene3D" id="3.30.2310.30">
    <property type="match status" value="1"/>
</dbReference>
<dbReference type="Gene3D" id="1.10.287.620">
    <property type="entry name" value="Helix Hairpins"/>
    <property type="match status" value="1"/>
</dbReference>
<dbReference type="InterPro" id="IPR038233">
    <property type="entry name" value="Colicin_D/E5_nuclease"/>
</dbReference>
<dbReference type="InterPro" id="IPR021964">
    <property type="entry name" value="Colicin_E5_C"/>
</dbReference>
<dbReference type="InterPro" id="IPR038234">
    <property type="entry name" value="Colicin_E5_C_sf"/>
</dbReference>
<dbReference type="Pfam" id="PF12106">
    <property type="entry name" value="Colicin_E5"/>
    <property type="match status" value="1"/>
</dbReference>
<dbReference type="SUPFAM" id="SSF102824">
    <property type="entry name" value="Colicin D/E5 nuclease domain"/>
    <property type="match status" value="1"/>
</dbReference>
<dbReference type="SUPFAM" id="SSF69985">
    <property type="entry name" value="Colicin E3 receptor domain"/>
    <property type="match status" value="1"/>
</dbReference>
<organism>
    <name type="scientific">Escherichia coli</name>
    <dbReference type="NCBI Taxonomy" id="562"/>
    <lineage>
        <taxon>Bacteria</taxon>
        <taxon>Pseudomonadati</taxon>
        <taxon>Pseudomonadota</taxon>
        <taxon>Gammaproteobacteria</taxon>
        <taxon>Enterobacterales</taxon>
        <taxon>Enterobacteriaceae</taxon>
        <taxon>Escherichia</taxon>
    </lineage>
</organism>
<geneLocation type="plasmid">
    <name>ColE5-099</name>
</geneLocation>